<geneLocation type="plasmid">
    <name>pXO2</name>
</geneLocation>
<geneLocation type="plasmid">
    <name>pTE702</name>
</geneLocation>
<keyword id="KW-0002">3D-structure</keyword>
<keyword id="KW-0972">Capsule biogenesis/degradation</keyword>
<keyword id="KW-0903">Direct protein sequencing</keyword>
<keyword id="KW-0378">Hydrolase</keyword>
<keyword id="KW-0614">Plasmid</keyword>
<keyword id="KW-0645">Protease</keyword>
<keyword id="KW-1185">Reference proteome</keyword>
<keyword id="KW-0732">Signal</keyword>
<keyword id="KW-0808">Transferase</keyword>
<keyword id="KW-0843">Virulence</keyword>
<keyword id="KW-0865">Zymogen</keyword>
<sequence length="528" mass="58084">MNSFKWGKKIILFCLIVSLMGGIGVSCSFNKIKDSVKQKIDSMGDKGTYGVSASHPLAVEEGMKVLKNGGSAVDAAIVVSYVLGVVELHASGIGGGGGMLIISKDKETFIDYRETTPYFTGNQKPHIGVPGFVAGMEYIHDNYGSLPMGELLQPAINYAEKGFKVDDSLTMRLDLAKPRIYSDKLSIFYPNGEPIETGETLIQTDLARTLKKIQKEGAKGFYEGGVARAISKTAKISLEDIKGYKVEVRKPVKGNYMGYDVYTAPPPFSGVTLLQMLKLAEKKEVYKDVDHTATYMSKMEEISRIAYQDRKKNLGDPNYVNMDPNKMVSDKYISTMKNENGDALSEAEHESTTHFVIIDRDGTVVSSTNTLSNFFGTGKYTAGFFLNNQLQNFGSEGFNSYEPGKRSRTFMAPTVLKKDGETIGIGSPGGNRIPQILTPILDKYTHGKGSLQDIINEYRFTFEKNTAYTEIQLSSEVKNELSRKGLNVKKKVSPAFFGGVQALIKDERDNVITGAGDGRRNGTWKSNK</sequence>
<accession>Q51693</accession>
<accession>Q6F034</accession>
<accession>Q8KYD9</accession>
<accession>Q9RMX7</accession>
<proteinExistence type="evidence at protein level"/>
<name>CAPD_BACAN</name>
<dbReference type="EC" id="2.3.2.-"/>
<dbReference type="EMBL" id="D14037">
    <property type="protein sequence ID" value="BAA03126.1"/>
    <property type="status" value="ALT_INIT"/>
    <property type="molecule type" value="Genomic_DNA"/>
</dbReference>
<dbReference type="EMBL" id="AF188935">
    <property type="protein sequence ID" value="AAF13660.1"/>
    <property type="status" value="ALT_INIT"/>
    <property type="molecule type" value="Genomic_DNA"/>
</dbReference>
<dbReference type="EMBL" id="AE011191">
    <property type="protein sequence ID" value="AAM26219.1"/>
    <property type="molecule type" value="Genomic_DNA"/>
</dbReference>
<dbReference type="EMBL" id="AE017335">
    <property type="protein sequence ID" value="AAT28993.2"/>
    <property type="molecule type" value="Genomic_DNA"/>
</dbReference>
<dbReference type="PIR" id="S36209">
    <property type="entry name" value="S36209"/>
</dbReference>
<dbReference type="RefSeq" id="NP_053210.1">
    <property type="nucleotide sequence ID" value="NC_002146.1"/>
</dbReference>
<dbReference type="PDB" id="3G9K">
    <property type="method" value="X-ray"/>
    <property type="resolution" value="1.79 A"/>
    <property type="chains" value="D/L=29-351, F/S=352-528"/>
</dbReference>
<dbReference type="PDB" id="3GA9">
    <property type="method" value="X-ray"/>
    <property type="resolution" value="2.30 A"/>
    <property type="chains" value="L=29-351, S=352-528"/>
</dbReference>
<dbReference type="PDBsum" id="3G9K"/>
<dbReference type="PDBsum" id="3GA9"/>
<dbReference type="SMR" id="Q51693"/>
<dbReference type="MEROPS" id="T03.023"/>
<dbReference type="KEGG" id="bar:GBAA_pXO2_0063"/>
<dbReference type="PATRIC" id="fig|1392.230.peg.5911"/>
<dbReference type="HOGENOM" id="CLU_014813_0_3_9"/>
<dbReference type="OMA" id="ICGMGPP"/>
<dbReference type="BioCyc" id="MetaCyc:GBAA_PXO2_0063-MONOMER"/>
<dbReference type="BRENDA" id="3.4.19.13">
    <property type="organism ID" value="634"/>
</dbReference>
<dbReference type="UniPathway" id="UPA00934"/>
<dbReference type="EvolutionaryTrace" id="Q51693"/>
<dbReference type="PRO" id="PR:Q51693"/>
<dbReference type="Proteomes" id="UP000000594">
    <property type="component" value="Plasmid pXO2"/>
</dbReference>
<dbReference type="GO" id="GO:0008233">
    <property type="term" value="F:peptidase activity"/>
    <property type="evidence" value="ECO:0007669"/>
    <property type="project" value="UniProtKB-KW"/>
</dbReference>
<dbReference type="GO" id="GO:0016740">
    <property type="term" value="F:transferase activity"/>
    <property type="evidence" value="ECO:0007669"/>
    <property type="project" value="UniProtKB-KW"/>
</dbReference>
<dbReference type="GO" id="GO:0045227">
    <property type="term" value="P:capsule polysaccharide biosynthetic process"/>
    <property type="evidence" value="ECO:0007669"/>
    <property type="project" value="UniProtKB-UniPathway"/>
</dbReference>
<dbReference type="GO" id="GO:0006508">
    <property type="term" value="P:proteolysis"/>
    <property type="evidence" value="ECO:0007669"/>
    <property type="project" value="UniProtKB-KW"/>
</dbReference>
<dbReference type="Gene3D" id="1.10.246.230">
    <property type="match status" value="1"/>
</dbReference>
<dbReference type="Gene3D" id="3.60.20.40">
    <property type="match status" value="1"/>
</dbReference>
<dbReference type="InterPro" id="IPR051792">
    <property type="entry name" value="GGT_bact"/>
</dbReference>
<dbReference type="InterPro" id="IPR043137">
    <property type="entry name" value="GGT_ssub"/>
</dbReference>
<dbReference type="InterPro" id="IPR029055">
    <property type="entry name" value="Ntn_hydrolases_N"/>
</dbReference>
<dbReference type="PANTHER" id="PTHR43199">
    <property type="entry name" value="GLUTATHIONE HYDROLASE"/>
    <property type="match status" value="1"/>
</dbReference>
<dbReference type="PANTHER" id="PTHR43199:SF1">
    <property type="entry name" value="GLUTATHIONE HYDROLASE PROENZYME"/>
    <property type="match status" value="1"/>
</dbReference>
<dbReference type="Pfam" id="PF01019">
    <property type="entry name" value="G_glu_transpept"/>
    <property type="match status" value="1"/>
</dbReference>
<dbReference type="PRINTS" id="PR01210">
    <property type="entry name" value="GGTRANSPTASE"/>
</dbReference>
<dbReference type="SUPFAM" id="SSF56235">
    <property type="entry name" value="N-terminal nucleophile aminohydrolases (Ntn hydrolases)"/>
    <property type="match status" value="1"/>
</dbReference>
<protein>
    <recommendedName>
        <fullName>Capsule biosynthesis protein CapD proenzyme</fullName>
        <ecNumber>2.3.2.-</ecNumber>
    </recommendedName>
    <component>
        <recommendedName>
            <fullName>Capsule biosynthesis protein CapD large chain</fullName>
        </recommendedName>
    </component>
    <component>
        <recommendedName>
            <fullName>Capsule biosynthesis protein CapD small chain</fullName>
        </recommendedName>
    </component>
</protein>
<evidence type="ECO:0000255" key="1"/>
<evidence type="ECO:0000269" key="2">
    <source>
    </source>
</evidence>
<evidence type="ECO:0000269" key="3">
    <source>
    </source>
</evidence>
<evidence type="ECO:0000269" key="4">
    <source>
    </source>
</evidence>
<evidence type="ECO:0000269" key="5">
    <source>
    </source>
</evidence>
<evidence type="ECO:0000269" key="6">
    <source>
    </source>
</evidence>
<evidence type="ECO:0000305" key="7"/>
<evidence type="ECO:0000305" key="8">
    <source>
    </source>
</evidence>
<evidence type="ECO:0007744" key="9">
    <source>
        <dbReference type="PDB" id="3G9K"/>
    </source>
</evidence>
<evidence type="ECO:0007744" key="10">
    <source>
        <dbReference type="PDB" id="3GA9"/>
    </source>
</evidence>
<evidence type="ECO:0007829" key="11">
    <source>
        <dbReference type="PDB" id="3G9K"/>
    </source>
</evidence>
<evidence type="ECO:0007829" key="12">
    <source>
        <dbReference type="PDB" id="3GA9"/>
    </source>
</evidence>
<gene>
    <name type="primary">capD</name>
    <name type="synonym">dep</name>
    <name type="ordered locus">pXO2-55</name>
    <name type="ordered locus">BXB0063</name>
    <name type="ordered locus">GBAA_pXO2_0063</name>
</gene>
<comment type="function">
    <text evidence="2 4 5 6">Transpeptidase that cleaves the poly-gamma-D-glutamate capsule and catalyzes the formation of an amide bond with the side-chain amino group of meso-diaminopimelic acid (m-DAP) in the peptidoglycan scaffold (PubMed:19017271). Degradation of the high-molecular weight capsule (H-capsule) to the lower-molecular weight capsule (L-capsule), which is released from the bacterial cell surface. The production of L-capsule is essential to mediate escape from host defenses.</text>
</comment>
<comment type="pathway">
    <text>Capsule biogenesis; capsule polysaccharide biosynthesis.</text>
</comment>
<comment type="subunit">
    <text evidence="5">This enzyme consists of two polypeptide chains, which are synthesized in precursor form from a single polypeptide.</text>
</comment>
<comment type="induction">
    <text evidence="3">Capsule synthesis is transcriptionally regulated by AtxA, AcpA and AcpB.</text>
</comment>
<comment type="PTM">
    <text>Cleaved by autocatalysis into a large and a small subunit.</text>
</comment>
<comment type="similarity">
    <text evidence="7">Belongs to the gamma-glutamyltransferase family.</text>
</comment>
<comment type="sequence caution" evidence="7">
    <conflict type="erroneous initiation">
        <sequence resource="EMBL-CDS" id="AAF13660"/>
    </conflict>
    <text>Truncated N-terminus.</text>
</comment>
<comment type="sequence caution" evidence="7">
    <conflict type="erroneous initiation">
        <sequence resource="EMBL-CDS" id="BAA03126"/>
    </conflict>
    <text>Truncated N-terminus.</text>
</comment>
<organism>
    <name type="scientific">Bacillus anthracis</name>
    <dbReference type="NCBI Taxonomy" id="1392"/>
    <lineage>
        <taxon>Bacteria</taxon>
        <taxon>Bacillati</taxon>
        <taxon>Bacillota</taxon>
        <taxon>Bacilli</taxon>
        <taxon>Bacillales</taxon>
        <taxon>Bacillaceae</taxon>
        <taxon>Bacillus</taxon>
        <taxon>Bacillus cereus group</taxon>
    </lineage>
</organism>
<reference key="1">
    <citation type="journal article" date="1993" name="Mol. Microbiol.">
        <title>Identification of a novel gene, dep, associated with depolymerization of the capsular polymer in Bacillus anthracis.</title>
        <authorList>
            <person name="Uchida I."/>
            <person name="Makino S."/>
            <person name="Sasakawa C."/>
            <person name="Yoshikawa M."/>
            <person name="Sugimoto C."/>
            <person name="Terakado N."/>
        </authorList>
    </citation>
    <scope>NUCLEOTIDE SEQUENCE [GENOMIC DNA]</scope>
    <scope>FUNCTION</scope>
    <source>
        <strain>Davis</strain>
        <plasmid>pTE702</plasmid>
    </source>
</reference>
<reference key="2">
    <citation type="journal article" date="1999" name="J. Appl. Microbiol.">
        <title>Sequence, assembly and analysis of pXO1 and pXO2.</title>
        <authorList>
            <person name="Okinaka R.T."/>
            <person name="Cloud K."/>
            <person name="Hampton O."/>
            <person name="Hoffmaster A."/>
            <person name="Hill K.K."/>
            <person name="Keim P."/>
            <person name="Koehler T."/>
            <person name="Lamke G."/>
            <person name="Kumano S."/>
            <person name="Manter D."/>
            <person name="Martinez Y."/>
            <person name="Ricke D."/>
            <person name="Svensson R."/>
            <person name="Jackson P.J."/>
        </authorList>
    </citation>
    <scope>NUCLEOTIDE SEQUENCE [GENOMIC DNA]</scope>
    <source>
        <strain>Pasteur</strain>
        <plasmid>pXO2</plasmid>
    </source>
</reference>
<reference key="3">
    <citation type="journal article" date="2002" name="Science">
        <title>Comparative genome sequencing for discovery of novel polymorphisms in Bacillus anthracis.</title>
        <authorList>
            <person name="Read T.D."/>
            <person name="Salzberg S.L."/>
            <person name="Pop M."/>
            <person name="Shumway M.F."/>
            <person name="Umayam L."/>
            <person name="Jiang L."/>
            <person name="Holtzapple E."/>
            <person name="Busch J.D."/>
            <person name="Smith K.L."/>
            <person name="Schupp J.M."/>
            <person name="Solomon D."/>
            <person name="Keim P."/>
            <person name="Fraser C.M."/>
        </authorList>
    </citation>
    <scope>NUCLEOTIDE SEQUENCE [GENOMIC DNA]</scope>
    <source>
        <strain>Ames / isolate Florida / A2012</strain>
        <plasmid>pXO2</plasmid>
    </source>
</reference>
<reference key="4">
    <citation type="journal article" date="2009" name="J. Bacteriol.">
        <title>The complete genome sequence of Bacillus anthracis Ames 'Ancestor'.</title>
        <authorList>
            <person name="Ravel J."/>
            <person name="Jiang L."/>
            <person name="Stanley S.T."/>
            <person name="Wilson M.R."/>
            <person name="Decker R.S."/>
            <person name="Read T.D."/>
            <person name="Worsham P."/>
            <person name="Keim P.S."/>
            <person name="Salzberg S.L."/>
            <person name="Fraser-Liggett C.M."/>
            <person name="Rasko D.A."/>
        </authorList>
    </citation>
    <scope>NUCLEOTIDE SEQUENCE [LARGE SCALE GENOMIC DNA]</scope>
    <source>
        <strain>Ames ancestor</strain>
        <plasmid>pXO2</plasmid>
    </source>
</reference>
<reference key="5">
    <citation type="journal article" date="2002" name="J. Infect. Dis.">
        <title>Effect of the lower molecular capsule released from the cell surface of Bacillus anthracis on the pathogenesis of anthrax.</title>
        <authorList>
            <person name="Makino S."/>
            <person name="Watarai M."/>
            <person name="Cheun H.-I."/>
            <person name="Shirahata T."/>
            <person name="Uchida I."/>
        </authorList>
    </citation>
    <scope>FUNCTION</scope>
</reference>
<reference key="6">
    <citation type="journal article" date="2004" name="J. Bacteriol.">
        <title>atxA controls Bacillus anthracis capsule synthesis via acpA and a newly discovered regulator, acpB.</title>
        <authorList>
            <person name="Drysdale M."/>
            <person name="Bourgogne A."/>
            <person name="Hilsenbeck S.G."/>
            <person name="Koehler T.M."/>
        </authorList>
    </citation>
    <scope>INDUCTION</scope>
    <source>
        <plasmid>pXO2</plasmid>
    </source>
</reference>
<reference key="7">
    <citation type="journal article" date="2009" name="Mol. Microbiol.">
        <title>Capsule anchoring in Bacillus anthracis occurs by a transpeptidation reaction that is inhibited by capsidin.</title>
        <authorList>
            <person name="Richter S."/>
            <person name="Anderson V.J."/>
            <person name="Garufi G."/>
            <person name="Lu L."/>
            <person name="Budzik J.M."/>
            <person name="Joachimiak A."/>
            <person name="He C."/>
            <person name="Schneewind O."/>
            <person name="Missiakas D."/>
        </authorList>
    </citation>
    <scope>FUNCTION</scope>
    <scope>CATALYTIC ACTIVITY</scope>
    <scope>ACTIVE SITE</scope>
</reference>
<reference key="8">
    <citation type="journal article" date="2009" name="J. Biol. Chem.">
        <title>Crystal structure of Bacillus anthracis transpeptidase enzyme CapD.</title>
        <authorList>
            <person name="Wu R."/>
            <person name="Richter S."/>
            <person name="Zhang R.G."/>
            <person name="Anderson V.J."/>
            <person name="Missiakas D."/>
            <person name="Joachimiak A."/>
        </authorList>
    </citation>
    <scope>X-RAY CRYSTALLOGRAPHY (1.79 ANGSTROMS) OF 29-528 IN COMPLEX WITH GLUTAMYLGLUTAMATE</scope>
    <scope>PARTIAL PROTEIN SEQUENCE</scope>
    <scope>FUNCTION</scope>
    <scope>CATALYTIC ACTIVITY</scope>
    <scope>ACTIVE SITE</scope>
    <scope>SUBUNIT</scope>
    <scope>MUTAGENESIS OF THR-368; THR-370; SER-372 AND ARG-520</scope>
    <scope>AUTOCATALYTIC CLEAVAGE</scope>
</reference>
<feature type="signal peptide" evidence="1">
    <location>
        <begin position="1"/>
        <end position="26"/>
    </location>
</feature>
<feature type="chain" id="PRO_0000205980" description="Capsule biosynthesis protein CapD large chain">
    <location>
        <begin position="27"/>
        <end position="528"/>
    </location>
</feature>
<feature type="chain" id="PRO_0000424555" description="Capsule biosynthesis protein CapD small chain">
    <location>
        <begin position="352"/>
        <end position="528"/>
    </location>
</feature>
<feature type="active site" description="Nucleophile" evidence="4 5">
    <location>
        <position position="352"/>
    </location>
</feature>
<feature type="binding site" evidence="8 9 10">
    <location>
        <position position="352"/>
    </location>
    <ligand>
        <name>poly-gamma-D-glutamate</name>
        <dbReference type="ChEBI" id="CHEBI:189702"/>
    </ligand>
</feature>
<feature type="binding site" evidence="8 9 10">
    <location>
        <begin position="429"/>
        <end position="432"/>
    </location>
    <ligand>
        <name>poly-gamma-D-glutamate</name>
        <dbReference type="ChEBI" id="CHEBI:189702"/>
    </ligand>
</feature>
<feature type="binding site" evidence="8 9 10">
    <location>
        <position position="520"/>
    </location>
    <ligand>
        <name>poly-gamma-D-glutamate</name>
        <dbReference type="ChEBI" id="CHEBI:189702"/>
    </ligand>
</feature>
<feature type="sequence variant" description="In strain: Pasteur.">
    <original>S</original>
    <variation>N</variation>
    <location>
        <position position="400"/>
    </location>
</feature>
<feature type="mutagenesis site" description="Abolishes enzyme activity." evidence="5">
    <original>T</original>
    <variation>A</variation>
    <location>
        <position position="368"/>
    </location>
</feature>
<feature type="mutagenesis site" description="Abolishes enzyme activity." evidence="5">
    <original>T</original>
    <variation>A</variation>
    <location>
        <position position="370"/>
    </location>
</feature>
<feature type="mutagenesis site" description="Slightly reduces enzyme activity." evidence="5">
    <original>S</original>
    <variation>A</variation>
    <location>
        <position position="372"/>
    </location>
</feature>
<feature type="mutagenesis site" description="Abolishes enzyme activity." evidence="5">
    <original>R</original>
    <variation>A</variation>
    <location>
        <position position="520"/>
    </location>
</feature>
<feature type="strand" evidence="11">
    <location>
        <begin position="50"/>
        <end position="55"/>
    </location>
</feature>
<feature type="helix" evidence="11">
    <location>
        <begin position="56"/>
        <end position="67"/>
    </location>
</feature>
<feature type="helix" evidence="11">
    <location>
        <begin position="72"/>
        <end position="86"/>
    </location>
</feature>
<feature type="turn" evidence="11">
    <location>
        <begin position="87"/>
        <end position="90"/>
    </location>
</feature>
<feature type="strand" evidence="11">
    <location>
        <begin position="95"/>
        <end position="102"/>
    </location>
</feature>
<feature type="strand" evidence="11">
    <location>
        <begin position="107"/>
        <end position="111"/>
    </location>
</feature>
<feature type="helix" evidence="11">
    <location>
        <begin position="132"/>
        <end position="143"/>
    </location>
</feature>
<feature type="helix" evidence="11">
    <location>
        <begin position="148"/>
        <end position="161"/>
    </location>
</feature>
<feature type="helix" evidence="11">
    <location>
        <begin position="167"/>
        <end position="180"/>
    </location>
</feature>
<feature type="helix" evidence="12">
    <location>
        <begin position="183"/>
        <end position="185"/>
    </location>
</feature>
<feature type="helix" evidence="11">
    <location>
        <begin position="186"/>
        <end position="188"/>
    </location>
</feature>
<feature type="helix" evidence="11">
    <location>
        <begin position="190"/>
        <end position="192"/>
    </location>
</feature>
<feature type="helix" evidence="11">
    <location>
        <begin position="204"/>
        <end position="216"/>
    </location>
</feature>
<feature type="helix" evidence="11">
    <location>
        <begin position="219"/>
        <end position="222"/>
    </location>
</feature>
<feature type="helix" evidence="11">
    <location>
        <begin position="224"/>
        <end position="234"/>
    </location>
</feature>
<feature type="helix" evidence="11">
    <location>
        <begin position="238"/>
        <end position="242"/>
    </location>
</feature>
<feature type="strand" evidence="11">
    <location>
        <begin position="247"/>
        <end position="249"/>
    </location>
</feature>
<feature type="strand" evidence="11">
    <location>
        <begin position="252"/>
        <end position="256"/>
    </location>
</feature>
<feature type="strand" evidence="11">
    <location>
        <begin position="259"/>
        <end position="263"/>
    </location>
</feature>
<feature type="helix" evidence="11">
    <location>
        <begin position="270"/>
        <end position="282"/>
    </location>
</feature>
<feature type="helix" evidence="11">
    <location>
        <begin position="285"/>
        <end position="288"/>
    </location>
</feature>
<feature type="helix" evidence="11">
    <location>
        <begin position="292"/>
        <end position="312"/>
    </location>
</feature>
<feature type="helix" evidence="11">
    <location>
        <begin position="324"/>
        <end position="327"/>
    </location>
</feature>
<feature type="helix" evidence="11">
    <location>
        <begin position="330"/>
        <end position="334"/>
    </location>
</feature>
<feature type="strand" evidence="11">
    <location>
        <begin position="353"/>
        <end position="358"/>
    </location>
</feature>
<feature type="strand" evidence="11">
    <location>
        <begin position="364"/>
        <end position="370"/>
    </location>
</feature>
<feature type="turn" evidence="11">
    <location>
        <begin position="374"/>
        <end position="377"/>
    </location>
</feature>
<feature type="strand" evidence="11">
    <location>
        <begin position="414"/>
        <end position="418"/>
    </location>
</feature>
<feature type="strand" evidence="11">
    <location>
        <begin position="421"/>
        <end position="426"/>
    </location>
</feature>
<feature type="helix" evidence="11">
    <location>
        <begin position="430"/>
        <end position="432"/>
    </location>
</feature>
<feature type="helix" evidence="11">
    <location>
        <begin position="433"/>
        <end position="445"/>
    </location>
</feature>
<feature type="helix" evidence="11">
    <location>
        <begin position="451"/>
        <end position="456"/>
    </location>
</feature>
<feature type="strand" evidence="11">
    <location>
        <begin position="460"/>
        <end position="463"/>
    </location>
</feature>
<feature type="strand" evidence="11">
    <location>
        <begin position="466"/>
        <end position="471"/>
    </location>
</feature>
<feature type="helix" evidence="11">
    <location>
        <begin position="475"/>
        <end position="482"/>
    </location>
</feature>
<feature type="turn" evidence="11">
    <location>
        <begin position="483"/>
        <end position="485"/>
    </location>
</feature>
<feature type="strand" evidence="11">
    <location>
        <begin position="487"/>
        <end position="490"/>
    </location>
</feature>
<feature type="helix" evidence="11">
    <location>
        <begin position="494"/>
        <end position="497"/>
    </location>
</feature>
<feature type="strand" evidence="11">
    <location>
        <begin position="501"/>
        <end position="506"/>
    </location>
</feature>
<feature type="turn" evidence="11">
    <location>
        <begin position="507"/>
        <end position="510"/>
    </location>
</feature>
<feature type="strand" evidence="11">
    <location>
        <begin position="511"/>
        <end position="515"/>
    </location>
</feature>
<feature type="helix" evidence="11">
    <location>
        <begin position="518"/>
        <end position="520"/>
    </location>
</feature>
<feature type="strand" evidence="11">
    <location>
        <begin position="523"/>
        <end position="526"/>
    </location>
</feature>